<accession>Q41344</accession>
<reference key="1">
    <citation type="journal article" date="1998" name="Plant Mol. Biol.">
        <title>Molecular cloning and mRNA localization of tomato pollen profilin.</title>
        <authorList>
            <person name="Yu L.X."/>
            <person name="Nasrallah J."/>
            <person name="Valenta R."/>
            <person name="Parthasarathy M.V."/>
        </authorList>
    </citation>
    <scope>NUCLEOTIDE SEQUENCE [MRNA]</scope>
    <source>
        <strain>cv. Moneymaker</strain>
        <tissue>Pollen</tissue>
    </source>
</reference>
<protein>
    <recommendedName>
        <fullName>Profilin-1</fullName>
    </recommendedName>
</protein>
<dbReference type="EMBL" id="U50195">
    <property type="protein sequence ID" value="AAB03271.1"/>
    <property type="molecule type" value="mRNA"/>
</dbReference>
<dbReference type="PIR" id="T07856">
    <property type="entry name" value="T07856"/>
</dbReference>
<dbReference type="RefSeq" id="NP_001233869.1">
    <property type="nucleotide sequence ID" value="NM_001246940.1"/>
</dbReference>
<dbReference type="SMR" id="Q41344"/>
<dbReference type="FunCoup" id="Q41344">
    <property type="interactions" value="541"/>
</dbReference>
<dbReference type="STRING" id="4081.Q41344"/>
<dbReference type="Allergome" id="703">
    <property type="allergen name" value="Sola l 1"/>
</dbReference>
<dbReference type="PaxDb" id="4081-Solyc12g044630.1.1"/>
<dbReference type="EnsemblPlants" id="Solyc12g044630.2.1">
    <property type="protein sequence ID" value="Solyc12g044630.2.1"/>
    <property type="gene ID" value="Solyc12g044630.2"/>
</dbReference>
<dbReference type="GeneID" id="544018"/>
<dbReference type="Gramene" id="Solyc12g044630.2.1">
    <property type="protein sequence ID" value="Solyc12g044630.2.1"/>
    <property type="gene ID" value="Solyc12g044630.2"/>
</dbReference>
<dbReference type="KEGG" id="sly:544018"/>
<dbReference type="eggNOG" id="KOG1755">
    <property type="taxonomic scope" value="Eukaryota"/>
</dbReference>
<dbReference type="HOGENOM" id="CLU_120772_0_1_1"/>
<dbReference type="InParanoid" id="Q41344"/>
<dbReference type="OMA" id="GLQPEMC"/>
<dbReference type="OrthoDB" id="421374at2759"/>
<dbReference type="PhylomeDB" id="Q41344"/>
<dbReference type="Proteomes" id="UP000004994">
    <property type="component" value="Chromosome 12"/>
</dbReference>
<dbReference type="GO" id="GO:0005938">
    <property type="term" value="C:cell cortex"/>
    <property type="evidence" value="ECO:0000318"/>
    <property type="project" value="GO_Central"/>
</dbReference>
<dbReference type="GO" id="GO:0005856">
    <property type="term" value="C:cytoskeleton"/>
    <property type="evidence" value="ECO:0007669"/>
    <property type="project" value="UniProtKB-SubCell"/>
</dbReference>
<dbReference type="GO" id="GO:0003785">
    <property type="term" value="F:actin monomer binding"/>
    <property type="evidence" value="ECO:0000318"/>
    <property type="project" value="GO_Central"/>
</dbReference>
<dbReference type="CDD" id="cd00148">
    <property type="entry name" value="PROF"/>
    <property type="match status" value="1"/>
</dbReference>
<dbReference type="FunFam" id="3.30.450.30:FF:000001">
    <property type="entry name" value="Profilin"/>
    <property type="match status" value="1"/>
</dbReference>
<dbReference type="Gene3D" id="3.30.450.30">
    <property type="entry name" value="Dynein light chain 2a, cytoplasmic"/>
    <property type="match status" value="1"/>
</dbReference>
<dbReference type="InterPro" id="IPR048278">
    <property type="entry name" value="PFN"/>
</dbReference>
<dbReference type="InterPro" id="IPR005455">
    <property type="entry name" value="PFN_euk"/>
</dbReference>
<dbReference type="InterPro" id="IPR036140">
    <property type="entry name" value="PFN_sf"/>
</dbReference>
<dbReference type="InterPro" id="IPR027310">
    <property type="entry name" value="Profilin_CS"/>
</dbReference>
<dbReference type="PANTHER" id="PTHR11604">
    <property type="entry name" value="PROFILIN"/>
    <property type="match status" value="1"/>
</dbReference>
<dbReference type="PANTHER" id="PTHR11604:SF62">
    <property type="entry name" value="PROFILIN-1"/>
    <property type="match status" value="1"/>
</dbReference>
<dbReference type="Pfam" id="PF00235">
    <property type="entry name" value="Profilin"/>
    <property type="match status" value="1"/>
</dbReference>
<dbReference type="PRINTS" id="PR00392">
    <property type="entry name" value="PROFILIN"/>
</dbReference>
<dbReference type="PRINTS" id="PR01640">
    <property type="entry name" value="PROFILINPLNT"/>
</dbReference>
<dbReference type="SMART" id="SM00392">
    <property type="entry name" value="PROF"/>
    <property type="match status" value="1"/>
</dbReference>
<dbReference type="SUPFAM" id="SSF55770">
    <property type="entry name" value="Profilin (actin-binding protein)"/>
    <property type="match status" value="1"/>
</dbReference>
<dbReference type="PROSITE" id="PS00414">
    <property type="entry name" value="PROFILIN"/>
    <property type="match status" value="1"/>
</dbReference>
<sequence>MSWQTYVDDHLMCDIEGTGHHLSSAAILGFDGSVWAQSPNFPKFKAEEITNIMKDFDEPGHLAPTGLFLAGTKYMVIQGEPGAVIRGKKGPGGITIKKTAQALIFGVYEEPVTPGQCNMVVEKIGDYLVDQGY</sequence>
<name>PROF1_SOLLC</name>
<organism>
    <name type="scientific">Solanum lycopersicum</name>
    <name type="common">Tomato</name>
    <name type="synonym">Lycopersicon esculentum</name>
    <dbReference type="NCBI Taxonomy" id="4081"/>
    <lineage>
        <taxon>Eukaryota</taxon>
        <taxon>Viridiplantae</taxon>
        <taxon>Streptophyta</taxon>
        <taxon>Embryophyta</taxon>
        <taxon>Tracheophyta</taxon>
        <taxon>Spermatophyta</taxon>
        <taxon>Magnoliopsida</taxon>
        <taxon>eudicotyledons</taxon>
        <taxon>Gunneridae</taxon>
        <taxon>Pentapetalae</taxon>
        <taxon>asterids</taxon>
        <taxon>lamiids</taxon>
        <taxon>Solanales</taxon>
        <taxon>Solanaceae</taxon>
        <taxon>Solanoideae</taxon>
        <taxon>Solaneae</taxon>
        <taxon>Solanum</taxon>
        <taxon>Solanum subgen. Lycopersicon</taxon>
    </lineage>
</organism>
<proteinExistence type="evidence at transcript level"/>
<feature type="initiator methionine" description="Removed" evidence="1">
    <location>
        <position position="1"/>
    </location>
</feature>
<feature type="chain" id="PRO_0000199644" description="Profilin-1">
    <location>
        <begin position="2"/>
        <end position="133"/>
    </location>
</feature>
<evidence type="ECO:0000250" key="1"/>
<evidence type="ECO:0000305" key="2"/>
<comment type="function">
    <text evidence="1">Binds to actin and affects the structure of the cytoskeleton. At high concentrations, profilin prevents the polymerization of actin, whereas it enhances it at low concentrations. By binding to PIP2, it inhibits the formation of IP3 and DG (By similarity).</text>
</comment>
<comment type="subunit">
    <text>Occurs in many kinds of cells as a complex with monomeric actin in a 1:1 ratio.</text>
</comment>
<comment type="subcellular location">
    <subcellularLocation>
        <location evidence="1">Cytoplasm</location>
        <location evidence="1">Cytoskeleton</location>
    </subcellularLocation>
</comment>
<comment type="tissue specificity">
    <text>Ubiquitous.</text>
</comment>
<comment type="similarity">
    <text evidence="2">Belongs to the profilin family.</text>
</comment>
<gene>
    <name type="primary">PRO1</name>
</gene>
<keyword id="KW-0009">Actin-binding</keyword>
<keyword id="KW-0963">Cytoplasm</keyword>
<keyword id="KW-0206">Cytoskeleton</keyword>
<keyword id="KW-1185">Reference proteome</keyword>